<sequence>MAFKDTGKTPVEPEVAIHRIRITLTSRNVKSLEKVCADLIRGAKEKNLKVKGPVRMPTKTLRITTRKTPCGEGSKTWDRFQMRIHKRLIDLHSPSEIVKQITSISIEPGVEVEVTIADA</sequence>
<proteinExistence type="inferred from homology"/>
<comment type="function">
    <text evidence="1">Component of the small ribosomal subunit. The ribosome is a large ribonucleoprotein complex responsible for the synthesis of proteins in the cell.</text>
</comment>
<comment type="subunit">
    <text evidence="1">Component of the 40S small ribosomal subunit.</text>
</comment>
<comment type="subcellular location">
    <subcellularLocation>
        <location evidence="1">Cytoplasm</location>
    </subcellularLocation>
</comment>
<comment type="PTM">
    <text evidence="1">Polyubiquitinated by ZNF598 via 'Lys-63'-linked ubiquitin chains when a ribosome has stalled, initiating the ribosome quality control (RQC) pathway to degrade the potentially detrimental aberrant nascent polypeptide. Deubiquitinated by OTUD3 and USP21, antagonizing ZNF598 activity.</text>
</comment>
<comment type="PTM">
    <text evidence="2">Ufmylated by UFL1.</text>
</comment>
<comment type="similarity">
    <text evidence="3">Belongs to the universal ribosomal protein uS10 family.</text>
</comment>
<gene>
    <name type="primary">RPS20</name>
    <name type="ORF">QtrA-10072</name>
</gene>
<accession>Q4R5D0</accession>
<protein>
    <recommendedName>
        <fullName evidence="3">Small ribosomal subunit protein uS10</fullName>
    </recommendedName>
    <alternativeName>
        <fullName>40S ribosomal protein S20</fullName>
    </alternativeName>
</protein>
<keyword id="KW-0007">Acetylation</keyword>
<keyword id="KW-0963">Cytoplasm</keyword>
<keyword id="KW-1017">Isopeptide bond</keyword>
<keyword id="KW-0597">Phosphoprotein</keyword>
<keyword id="KW-1185">Reference proteome</keyword>
<keyword id="KW-0687">Ribonucleoprotein</keyword>
<keyword id="KW-0689">Ribosomal protein</keyword>
<keyword id="KW-0832">Ubl conjugation</keyword>
<dbReference type="EMBL" id="AB169614">
    <property type="protein sequence ID" value="BAE01695.1"/>
    <property type="molecule type" value="mRNA"/>
</dbReference>
<dbReference type="RefSeq" id="XP_015310253.1">
    <property type="nucleotide sequence ID" value="XM_015454767.3"/>
</dbReference>
<dbReference type="SMR" id="Q4R5D0"/>
<dbReference type="STRING" id="9541.ENSMFAP00000019555"/>
<dbReference type="Ensembl" id="ENSMFAT00000074627.1">
    <property type="protein sequence ID" value="ENSMFAP00000056210.1"/>
    <property type="gene ID" value="ENSMFAG00000053482.1"/>
</dbReference>
<dbReference type="Ensembl" id="ENSMFAT00000090559.1">
    <property type="protein sequence ID" value="ENSMFAP00000046456.1"/>
    <property type="gene ID" value="ENSMFAG00000053482.1"/>
</dbReference>
<dbReference type="GeneID" id="101866725"/>
<dbReference type="KEGG" id="mcf:101866725"/>
<dbReference type="CTD" id="6224"/>
<dbReference type="VEuPathDB" id="HostDB:ENSMFAG00000032746"/>
<dbReference type="eggNOG" id="KOG0900">
    <property type="taxonomic scope" value="Eukaryota"/>
</dbReference>
<dbReference type="GeneTree" id="ENSGT00390000003248"/>
<dbReference type="OMA" id="WCEYRRR"/>
<dbReference type="OrthoDB" id="3166at314294"/>
<dbReference type="Proteomes" id="UP000233100">
    <property type="component" value="Chromosome 8"/>
</dbReference>
<dbReference type="GO" id="GO:0022626">
    <property type="term" value="C:cytosolic ribosome"/>
    <property type="evidence" value="ECO:0007669"/>
    <property type="project" value="UniProtKB-ARBA"/>
</dbReference>
<dbReference type="GO" id="GO:0015935">
    <property type="term" value="C:small ribosomal subunit"/>
    <property type="evidence" value="ECO:0007669"/>
    <property type="project" value="InterPro"/>
</dbReference>
<dbReference type="GO" id="GO:0003723">
    <property type="term" value="F:RNA binding"/>
    <property type="evidence" value="ECO:0007669"/>
    <property type="project" value="InterPro"/>
</dbReference>
<dbReference type="GO" id="GO:0003735">
    <property type="term" value="F:structural constituent of ribosome"/>
    <property type="evidence" value="ECO:0007669"/>
    <property type="project" value="InterPro"/>
</dbReference>
<dbReference type="GO" id="GO:0006412">
    <property type="term" value="P:translation"/>
    <property type="evidence" value="ECO:0007669"/>
    <property type="project" value="InterPro"/>
</dbReference>
<dbReference type="FunFam" id="3.30.70.600:FF:000011">
    <property type="entry name" value="Uncharacterized protein"/>
    <property type="match status" value="1"/>
</dbReference>
<dbReference type="Gene3D" id="3.30.70.600">
    <property type="entry name" value="Ribosomal protein S10 domain"/>
    <property type="match status" value="1"/>
</dbReference>
<dbReference type="HAMAP" id="MF_00508">
    <property type="entry name" value="Ribosomal_uS10"/>
    <property type="match status" value="1"/>
</dbReference>
<dbReference type="InterPro" id="IPR001848">
    <property type="entry name" value="Ribosomal_uS10"/>
</dbReference>
<dbReference type="InterPro" id="IPR018268">
    <property type="entry name" value="Ribosomal_uS10_CS"/>
</dbReference>
<dbReference type="InterPro" id="IPR027486">
    <property type="entry name" value="Ribosomal_uS10_dom"/>
</dbReference>
<dbReference type="InterPro" id="IPR036838">
    <property type="entry name" value="Ribosomal_uS10_dom_sf"/>
</dbReference>
<dbReference type="InterPro" id="IPR005729">
    <property type="entry name" value="Ribosomal_uS10_euk/arc"/>
</dbReference>
<dbReference type="NCBIfam" id="TIGR01046">
    <property type="entry name" value="uS10_euk_arch"/>
    <property type="match status" value="1"/>
</dbReference>
<dbReference type="PANTHER" id="PTHR11700">
    <property type="entry name" value="30S RIBOSOMAL PROTEIN S10 FAMILY MEMBER"/>
    <property type="match status" value="1"/>
</dbReference>
<dbReference type="Pfam" id="PF00338">
    <property type="entry name" value="Ribosomal_S10"/>
    <property type="match status" value="1"/>
</dbReference>
<dbReference type="PRINTS" id="PR00971">
    <property type="entry name" value="RIBOSOMALS10"/>
</dbReference>
<dbReference type="SMART" id="SM01403">
    <property type="entry name" value="Ribosomal_S10"/>
    <property type="match status" value="1"/>
</dbReference>
<dbReference type="SUPFAM" id="SSF54999">
    <property type="entry name" value="Ribosomal protein S10"/>
    <property type="match status" value="1"/>
</dbReference>
<dbReference type="PROSITE" id="PS00361">
    <property type="entry name" value="RIBOSOMAL_S10"/>
    <property type="match status" value="1"/>
</dbReference>
<organism>
    <name type="scientific">Macaca fascicularis</name>
    <name type="common">Crab-eating macaque</name>
    <name type="synonym">Cynomolgus monkey</name>
    <dbReference type="NCBI Taxonomy" id="9541"/>
    <lineage>
        <taxon>Eukaryota</taxon>
        <taxon>Metazoa</taxon>
        <taxon>Chordata</taxon>
        <taxon>Craniata</taxon>
        <taxon>Vertebrata</taxon>
        <taxon>Euteleostomi</taxon>
        <taxon>Mammalia</taxon>
        <taxon>Eutheria</taxon>
        <taxon>Euarchontoglires</taxon>
        <taxon>Primates</taxon>
        <taxon>Haplorrhini</taxon>
        <taxon>Catarrhini</taxon>
        <taxon>Cercopithecidae</taxon>
        <taxon>Cercopithecinae</taxon>
        <taxon>Macaca</taxon>
    </lineage>
</organism>
<evidence type="ECO:0000250" key="1">
    <source>
        <dbReference type="UniProtKB" id="P60866"/>
    </source>
</evidence>
<evidence type="ECO:0000250" key="2">
    <source>
        <dbReference type="UniProtKB" id="P60867"/>
    </source>
</evidence>
<evidence type="ECO:0000305" key="3"/>
<reference key="1">
    <citation type="submission" date="2005-06" db="EMBL/GenBank/DDBJ databases">
        <title>DNA sequences of macaque genes expressed in brain or testis and its evolutionary implications.</title>
        <authorList>
            <consortium name="International consortium for macaque cDNA sequencing and analysis"/>
        </authorList>
    </citation>
    <scope>NUCLEOTIDE SEQUENCE [LARGE SCALE MRNA]</scope>
    <source>
        <tissue>Temporal cortex</tissue>
    </source>
</reference>
<name>RS20_MACFA</name>
<feature type="initiator methionine" description="Removed" evidence="1">
    <location>
        <position position="1"/>
    </location>
</feature>
<feature type="chain" id="PRO_0000253622" description="Small ribosomal subunit protein uS10">
    <location>
        <begin position="2"/>
        <end position="119"/>
    </location>
</feature>
<feature type="modified residue" description="N-acetylalanine" evidence="1">
    <location>
        <position position="2"/>
    </location>
</feature>
<feature type="modified residue" description="N6-succinyllysine; alternate" evidence="2">
    <location>
        <position position="8"/>
    </location>
</feature>
<feature type="modified residue" description="Phosphothreonine" evidence="1">
    <location>
        <position position="9"/>
    </location>
</feature>
<feature type="modified residue" description="N6-acetyllysine" evidence="2">
    <location>
        <position position="34"/>
    </location>
</feature>
<feature type="modified residue" description="N6-acetyllysine" evidence="2">
    <location>
        <position position="75"/>
    </location>
</feature>
<feature type="modified residue" description="Phosphoserine" evidence="1">
    <location>
        <position position="93"/>
    </location>
</feature>
<feature type="cross-link" description="Glycyl lysine isopeptide (Lys-Gly) (interchain with G-Cter in ubiquitin)" evidence="1">
    <location>
        <position position="4"/>
    </location>
</feature>
<feature type="cross-link" description="Glycyl lysine isopeptide (Lys-Gly) (interchain with G-Cter in ubiquitin); alternate" evidence="1">
    <location>
        <position position="8"/>
    </location>
</feature>